<keyword id="KW-0028">Amino-acid biosynthesis</keyword>
<keyword id="KW-0963">Cytoplasm</keyword>
<keyword id="KW-0315">Glutamine amidotransferase</keyword>
<keyword id="KW-0368">Histidine biosynthesis</keyword>
<keyword id="KW-0378">Hydrolase</keyword>
<keyword id="KW-0456">Lyase</keyword>
<gene>
    <name evidence="1" type="primary">hisH</name>
    <name type="ordered locus">SCH_2085</name>
</gene>
<evidence type="ECO:0000255" key="1">
    <source>
        <dbReference type="HAMAP-Rule" id="MF_00278"/>
    </source>
</evidence>
<evidence type="ECO:0000305" key="2"/>
<reference key="1">
    <citation type="journal article" date="2005" name="Nucleic Acids Res.">
        <title>The genome sequence of Salmonella enterica serovar Choleraesuis, a highly invasive and resistant zoonotic pathogen.</title>
        <authorList>
            <person name="Chiu C.-H."/>
            <person name="Tang P."/>
            <person name="Chu C."/>
            <person name="Hu S."/>
            <person name="Bao Q."/>
            <person name="Yu J."/>
            <person name="Chou Y.-Y."/>
            <person name="Wang H.-S."/>
            <person name="Lee Y.-S."/>
        </authorList>
    </citation>
    <scope>NUCLEOTIDE SEQUENCE [LARGE SCALE GENOMIC DNA]</scope>
    <source>
        <strain>SC-B67</strain>
    </source>
</reference>
<name>HIS5_SALCH</name>
<protein>
    <recommendedName>
        <fullName evidence="1">Imidazole glycerol phosphate synthase subunit HisH</fullName>
        <ecNumber evidence="1">4.3.2.10</ecNumber>
    </recommendedName>
    <alternativeName>
        <fullName evidence="1">IGP synthase glutaminase subunit</fullName>
        <ecNumber evidence="1">3.5.1.2</ecNumber>
    </alternativeName>
    <alternativeName>
        <fullName evidence="1">IGP synthase subunit HisH</fullName>
    </alternativeName>
    <alternativeName>
        <fullName evidence="1">ImGP synthase subunit HisH</fullName>
        <shortName evidence="1">IGPS subunit HisH</shortName>
    </alternativeName>
</protein>
<comment type="function">
    <text evidence="1">IGPS catalyzes the conversion of PRFAR and glutamine to IGP, AICAR and glutamate. The HisH subunit catalyzes the hydrolysis of glutamine to glutamate and ammonia as part of the synthesis of IGP and AICAR. The resulting ammonia molecule is channeled to the active site of HisF.</text>
</comment>
<comment type="catalytic activity">
    <reaction evidence="1">
        <text>5-[(5-phospho-1-deoxy-D-ribulos-1-ylimino)methylamino]-1-(5-phospho-beta-D-ribosyl)imidazole-4-carboxamide + L-glutamine = D-erythro-1-(imidazol-4-yl)glycerol 3-phosphate + 5-amino-1-(5-phospho-beta-D-ribosyl)imidazole-4-carboxamide + L-glutamate + H(+)</text>
        <dbReference type="Rhea" id="RHEA:24793"/>
        <dbReference type="ChEBI" id="CHEBI:15378"/>
        <dbReference type="ChEBI" id="CHEBI:29985"/>
        <dbReference type="ChEBI" id="CHEBI:58278"/>
        <dbReference type="ChEBI" id="CHEBI:58359"/>
        <dbReference type="ChEBI" id="CHEBI:58475"/>
        <dbReference type="ChEBI" id="CHEBI:58525"/>
        <dbReference type="EC" id="4.3.2.10"/>
    </reaction>
</comment>
<comment type="catalytic activity">
    <reaction evidence="1">
        <text>L-glutamine + H2O = L-glutamate + NH4(+)</text>
        <dbReference type="Rhea" id="RHEA:15889"/>
        <dbReference type="ChEBI" id="CHEBI:15377"/>
        <dbReference type="ChEBI" id="CHEBI:28938"/>
        <dbReference type="ChEBI" id="CHEBI:29985"/>
        <dbReference type="ChEBI" id="CHEBI:58359"/>
        <dbReference type="EC" id="3.5.1.2"/>
    </reaction>
</comment>
<comment type="pathway">
    <text evidence="1">Amino-acid biosynthesis; L-histidine biosynthesis; L-histidine from 5-phospho-alpha-D-ribose 1-diphosphate: step 5/9.</text>
</comment>
<comment type="subunit">
    <text evidence="1">Heterodimer of HisH and HisF.</text>
</comment>
<comment type="subcellular location">
    <subcellularLocation>
        <location evidence="1">Cytoplasm</location>
    </subcellularLocation>
</comment>
<comment type="sequence caution" evidence="2">
    <conflict type="erroneous initiation">
        <sequence resource="EMBL-CDS" id="AAX65991"/>
    </conflict>
</comment>
<proteinExistence type="inferred from homology"/>
<dbReference type="EC" id="4.3.2.10" evidence="1"/>
<dbReference type="EC" id="3.5.1.2" evidence="1"/>
<dbReference type="EMBL" id="AE017220">
    <property type="protein sequence ID" value="AAX65991.1"/>
    <property type="status" value="ALT_INIT"/>
    <property type="molecule type" value="Genomic_DNA"/>
</dbReference>
<dbReference type="RefSeq" id="WP_001103591.1">
    <property type="nucleotide sequence ID" value="NC_006905.1"/>
</dbReference>
<dbReference type="SMR" id="Q57MS0"/>
<dbReference type="MEROPS" id="C26.965"/>
<dbReference type="KEGG" id="sec:SCH_2085"/>
<dbReference type="HOGENOM" id="CLU_071837_0_0_6"/>
<dbReference type="UniPathway" id="UPA00031">
    <property type="reaction ID" value="UER00010"/>
</dbReference>
<dbReference type="Proteomes" id="UP000000538">
    <property type="component" value="Chromosome"/>
</dbReference>
<dbReference type="GO" id="GO:0005737">
    <property type="term" value="C:cytoplasm"/>
    <property type="evidence" value="ECO:0007669"/>
    <property type="project" value="UniProtKB-SubCell"/>
</dbReference>
<dbReference type="GO" id="GO:0004359">
    <property type="term" value="F:glutaminase activity"/>
    <property type="evidence" value="ECO:0007669"/>
    <property type="project" value="UniProtKB-EC"/>
</dbReference>
<dbReference type="GO" id="GO:0000107">
    <property type="term" value="F:imidazoleglycerol-phosphate synthase activity"/>
    <property type="evidence" value="ECO:0007669"/>
    <property type="project" value="UniProtKB-UniRule"/>
</dbReference>
<dbReference type="GO" id="GO:0016829">
    <property type="term" value="F:lyase activity"/>
    <property type="evidence" value="ECO:0007669"/>
    <property type="project" value="UniProtKB-KW"/>
</dbReference>
<dbReference type="GO" id="GO:0000105">
    <property type="term" value="P:L-histidine biosynthetic process"/>
    <property type="evidence" value="ECO:0007669"/>
    <property type="project" value="UniProtKB-UniRule"/>
</dbReference>
<dbReference type="CDD" id="cd01748">
    <property type="entry name" value="GATase1_IGP_Synthase"/>
    <property type="match status" value="1"/>
</dbReference>
<dbReference type="FunFam" id="3.40.50.880:FF:000009">
    <property type="entry name" value="Imidazole glycerol phosphate synthase subunit HisH"/>
    <property type="match status" value="1"/>
</dbReference>
<dbReference type="Gene3D" id="3.40.50.880">
    <property type="match status" value="1"/>
</dbReference>
<dbReference type="HAMAP" id="MF_00278">
    <property type="entry name" value="HisH"/>
    <property type="match status" value="1"/>
</dbReference>
<dbReference type="InterPro" id="IPR029062">
    <property type="entry name" value="Class_I_gatase-like"/>
</dbReference>
<dbReference type="InterPro" id="IPR017926">
    <property type="entry name" value="GATASE"/>
</dbReference>
<dbReference type="InterPro" id="IPR010139">
    <property type="entry name" value="Imidazole-glycPsynth_HisH"/>
</dbReference>
<dbReference type="NCBIfam" id="TIGR01855">
    <property type="entry name" value="IMP_synth_hisH"/>
    <property type="match status" value="1"/>
</dbReference>
<dbReference type="PANTHER" id="PTHR42701">
    <property type="entry name" value="IMIDAZOLE GLYCEROL PHOSPHATE SYNTHASE SUBUNIT HISH"/>
    <property type="match status" value="1"/>
</dbReference>
<dbReference type="PANTHER" id="PTHR42701:SF1">
    <property type="entry name" value="IMIDAZOLE GLYCEROL PHOSPHATE SYNTHASE SUBUNIT HISH"/>
    <property type="match status" value="1"/>
</dbReference>
<dbReference type="Pfam" id="PF00117">
    <property type="entry name" value="GATase"/>
    <property type="match status" value="1"/>
</dbReference>
<dbReference type="PIRSF" id="PIRSF000495">
    <property type="entry name" value="Amidotransf_hisH"/>
    <property type="match status" value="1"/>
</dbReference>
<dbReference type="PRINTS" id="PR00096">
    <property type="entry name" value="GATASE"/>
</dbReference>
<dbReference type="SUPFAM" id="SSF52317">
    <property type="entry name" value="Class I glutamine amidotransferase-like"/>
    <property type="match status" value="1"/>
</dbReference>
<dbReference type="PROSITE" id="PS51273">
    <property type="entry name" value="GATASE_TYPE_1"/>
    <property type="match status" value="1"/>
</dbReference>
<feature type="chain" id="PRO_0000231755" description="Imidazole glycerol phosphate synthase subunit HisH">
    <location>
        <begin position="1"/>
        <end position="196"/>
    </location>
</feature>
<feature type="domain" description="Glutamine amidotransferase type-1" evidence="1">
    <location>
        <begin position="2"/>
        <end position="196"/>
    </location>
</feature>
<feature type="active site" description="Nucleophile" evidence="1">
    <location>
        <position position="77"/>
    </location>
</feature>
<feature type="active site" evidence="1">
    <location>
        <position position="178"/>
    </location>
</feature>
<feature type="active site" evidence="1">
    <location>
        <position position="180"/>
    </location>
</feature>
<sequence length="196" mass="21704">MNVVILDTGCANLSSVKSAVARHGYTPVVSREAEIVLRADKLFLPGVGTAQAAMDQLRERELIDLIKACTQPVLGICLGMQLLGRRSEETRGVDLLNIIEQDVPKMTDFGLPLPHMGWNRVYPQAGNRLFQGIEDGAYFYFVHSYAMPVNPWTIAQCNYGEPFTAAVQKDNFFGVQFHPERSGAAGAQLLKNFLEM</sequence>
<accession>Q57MS0</accession>
<organism>
    <name type="scientific">Salmonella choleraesuis (strain SC-B67)</name>
    <dbReference type="NCBI Taxonomy" id="321314"/>
    <lineage>
        <taxon>Bacteria</taxon>
        <taxon>Pseudomonadati</taxon>
        <taxon>Pseudomonadota</taxon>
        <taxon>Gammaproteobacteria</taxon>
        <taxon>Enterobacterales</taxon>
        <taxon>Enterobacteriaceae</taxon>
        <taxon>Salmonella</taxon>
    </lineage>
</organism>